<dbReference type="EC" id="2.7.1.30" evidence="1"/>
<dbReference type="EMBL" id="AM295007">
    <property type="protein sequence ID" value="CAM29752.1"/>
    <property type="molecule type" value="Genomic_DNA"/>
</dbReference>
<dbReference type="RefSeq" id="WP_002983556.1">
    <property type="nucleotide sequence ID" value="NC_009332.1"/>
</dbReference>
<dbReference type="SMR" id="A2RD27"/>
<dbReference type="GeneID" id="69900456"/>
<dbReference type="KEGG" id="spf:SpyM50409"/>
<dbReference type="HOGENOM" id="CLU_009281_2_3_9"/>
<dbReference type="UniPathway" id="UPA00618">
    <property type="reaction ID" value="UER00672"/>
</dbReference>
<dbReference type="GO" id="GO:0005829">
    <property type="term" value="C:cytosol"/>
    <property type="evidence" value="ECO:0007669"/>
    <property type="project" value="TreeGrafter"/>
</dbReference>
<dbReference type="GO" id="GO:0005524">
    <property type="term" value="F:ATP binding"/>
    <property type="evidence" value="ECO:0007669"/>
    <property type="project" value="UniProtKB-UniRule"/>
</dbReference>
<dbReference type="GO" id="GO:0004370">
    <property type="term" value="F:glycerol kinase activity"/>
    <property type="evidence" value="ECO:0000250"/>
    <property type="project" value="UniProtKB"/>
</dbReference>
<dbReference type="GO" id="GO:0019563">
    <property type="term" value="P:glycerol catabolic process"/>
    <property type="evidence" value="ECO:0007669"/>
    <property type="project" value="UniProtKB-UniRule"/>
</dbReference>
<dbReference type="GO" id="GO:0006071">
    <property type="term" value="P:glycerol metabolic process"/>
    <property type="evidence" value="ECO:0000250"/>
    <property type="project" value="UniProtKB"/>
</dbReference>
<dbReference type="GO" id="GO:0006072">
    <property type="term" value="P:glycerol-3-phosphate metabolic process"/>
    <property type="evidence" value="ECO:0007669"/>
    <property type="project" value="InterPro"/>
</dbReference>
<dbReference type="CDD" id="cd07786">
    <property type="entry name" value="FGGY_EcGK_like"/>
    <property type="match status" value="1"/>
</dbReference>
<dbReference type="FunFam" id="3.30.420.40:FF:000007">
    <property type="entry name" value="Glycerol kinase"/>
    <property type="match status" value="1"/>
</dbReference>
<dbReference type="FunFam" id="3.30.420.40:FF:000008">
    <property type="entry name" value="Glycerol kinase"/>
    <property type="match status" value="1"/>
</dbReference>
<dbReference type="Gene3D" id="3.30.420.40">
    <property type="match status" value="2"/>
</dbReference>
<dbReference type="HAMAP" id="MF_00186">
    <property type="entry name" value="Glycerol_kin"/>
    <property type="match status" value="1"/>
</dbReference>
<dbReference type="InterPro" id="IPR043129">
    <property type="entry name" value="ATPase_NBD"/>
</dbReference>
<dbReference type="InterPro" id="IPR000577">
    <property type="entry name" value="Carb_kinase_FGGY"/>
</dbReference>
<dbReference type="InterPro" id="IPR018483">
    <property type="entry name" value="Carb_kinase_FGGY_CS"/>
</dbReference>
<dbReference type="InterPro" id="IPR018485">
    <property type="entry name" value="FGGY_C"/>
</dbReference>
<dbReference type="InterPro" id="IPR018484">
    <property type="entry name" value="FGGY_N"/>
</dbReference>
<dbReference type="InterPro" id="IPR005999">
    <property type="entry name" value="Glycerol_kin"/>
</dbReference>
<dbReference type="NCBIfam" id="TIGR01311">
    <property type="entry name" value="glycerol_kin"/>
    <property type="match status" value="1"/>
</dbReference>
<dbReference type="NCBIfam" id="NF000756">
    <property type="entry name" value="PRK00047.1"/>
    <property type="match status" value="1"/>
</dbReference>
<dbReference type="PANTHER" id="PTHR10196:SF69">
    <property type="entry name" value="GLYCEROL KINASE"/>
    <property type="match status" value="1"/>
</dbReference>
<dbReference type="PANTHER" id="PTHR10196">
    <property type="entry name" value="SUGAR KINASE"/>
    <property type="match status" value="1"/>
</dbReference>
<dbReference type="Pfam" id="PF02782">
    <property type="entry name" value="FGGY_C"/>
    <property type="match status" value="1"/>
</dbReference>
<dbReference type="Pfam" id="PF00370">
    <property type="entry name" value="FGGY_N"/>
    <property type="match status" value="1"/>
</dbReference>
<dbReference type="PIRSF" id="PIRSF000538">
    <property type="entry name" value="GlpK"/>
    <property type="match status" value="1"/>
</dbReference>
<dbReference type="SUPFAM" id="SSF53067">
    <property type="entry name" value="Actin-like ATPase domain"/>
    <property type="match status" value="2"/>
</dbReference>
<dbReference type="PROSITE" id="PS00933">
    <property type="entry name" value="FGGY_KINASES_1"/>
    <property type="match status" value="1"/>
</dbReference>
<dbReference type="PROSITE" id="PS00445">
    <property type="entry name" value="FGGY_KINASES_2"/>
    <property type="match status" value="1"/>
</dbReference>
<feature type="chain" id="PRO_1000020803" description="Glycerol kinase">
    <location>
        <begin position="1"/>
        <end position="508"/>
    </location>
</feature>
<feature type="binding site" evidence="1">
    <location>
        <position position="14"/>
    </location>
    <ligand>
        <name>ADP</name>
        <dbReference type="ChEBI" id="CHEBI:456216"/>
    </ligand>
</feature>
<feature type="binding site" evidence="1">
    <location>
        <position position="14"/>
    </location>
    <ligand>
        <name>ATP</name>
        <dbReference type="ChEBI" id="CHEBI:30616"/>
    </ligand>
</feature>
<feature type="binding site" evidence="1">
    <location>
        <position position="14"/>
    </location>
    <ligand>
        <name>sn-glycerol 3-phosphate</name>
        <dbReference type="ChEBI" id="CHEBI:57597"/>
    </ligand>
</feature>
<feature type="binding site" evidence="1">
    <location>
        <position position="15"/>
    </location>
    <ligand>
        <name>ATP</name>
        <dbReference type="ChEBI" id="CHEBI:30616"/>
    </ligand>
</feature>
<feature type="binding site" evidence="1">
    <location>
        <position position="16"/>
    </location>
    <ligand>
        <name>ATP</name>
        <dbReference type="ChEBI" id="CHEBI:30616"/>
    </ligand>
</feature>
<feature type="binding site" evidence="1">
    <location>
        <position position="18"/>
    </location>
    <ligand>
        <name>ADP</name>
        <dbReference type="ChEBI" id="CHEBI:456216"/>
    </ligand>
</feature>
<feature type="binding site" evidence="1">
    <location>
        <position position="84"/>
    </location>
    <ligand>
        <name>glycerol</name>
        <dbReference type="ChEBI" id="CHEBI:17754"/>
    </ligand>
</feature>
<feature type="binding site" evidence="1">
    <location>
        <position position="84"/>
    </location>
    <ligand>
        <name>sn-glycerol 3-phosphate</name>
        <dbReference type="ChEBI" id="CHEBI:57597"/>
    </ligand>
</feature>
<feature type="binding site" evidence="1">
    <location>
        <position position="85"/>
    </location>
    <ligand>
        <name>glycerol</name>
        <dbReference type="ChEBI" id="CHEBI:17754"/>
    </ligand>
</feature>
<feature type="binding site" evidence="1">
    <location>
        <position position="85"/>
    </location>
    <ligand>
        <name>sn-glycerol 3-phosphate</name>
        <dbReference type="ChEBI" id="CHEBI:57597"/>
    </ligand>
</feature>
<feature type="binding site" evidence="1">
    <location>
        <position position="136"/>
    </location>
    <ligand>
        <name>glycerol</name>
        <dbReference type="ChEBI" id="CHEBI:17754"/>
    </ligand>
</feature>
<feature type="binding site" evidence="1">
    <location>
        <position position="136"/>
    </location>
    <ligand>
        <name>sn-glycerol 3-phosphate</name>
        <dbReference type="ChEBI" id="CHEBI:57597"/>
    </ligand>
</feature>
<feature type="binding site" evidence="1">
    <location>
        <position position="246"/>
    </location>
    <ligand>
        <name>glycerol</name>
        <dbReference type="ChEBI" id="CHEBI:17754"/>
    </ligand>
</feature>
<feature type="binding site" evidence="1">
    <location>
        <position position="246"/>
    </location>
    <ligand>
        <name>sn-glycerol 3-phosphate</name>
        <dbReference type="ChEBI" id="CHEBI:57597"/>
    </ligand>
</feature>
<feature type="binding site" evidence="1">
    <location>
        <position position="247"/>
    </location>
    <ligand>
        <name>glycerol</name>
        <dbReference type="ChEBI" id="CHEBI:17754"/>
    </ligand>
</feature>
<feature type="binding site" evidence="1">
    <location>
        <position position="268"/>
    </location>
    <ligand>
        <name>ADP</name>
        <dbReference type="ChEBI" id="CHEBI:456216"/>
    </ligand>
</feature>
<feature type="binding site" evidence="1">
    <location>
        <position position="268"/>
    </location>
    <ligand>
        <name>ATP</name>
        <dbReference type="ChEBI" id="CHEBI:30616"/>
    </ligand>
</feature>
<feature type="binding site" evidence="1">
    <location>
        <position position="311"/>
    </location>
    <ligand>
        <name>ADP</name>
        <dbReference type="ChEBI" id="CHEBI:456216"/>
    </ligand>
</feature>
<feature type="binding site" evidence="1">
    <location>
        <position position="311"/>
    </location>
    <ligand>
        <name>ATP</name>
        <dbReference type="ChEBI" id="CHEBI:30616"/>
    </ligand>
</feature>
<feature type="binding site" evidence="1">
    <location>
        <position position="315"/>
    </location>
    <ligand>
        <name>ATP</name>
        <dbReference type="ChEBI" id="CHEBI:30616"/>
    </ligand>
</feature>
<feature type="binding site" evidence="1">
    <location>
        <position position="412"/>
    </location>
    <ligand>
        <name>ADP</name>
        <dbReference type="ChEBI" id="CHEBI:456216"/>
    </ligand>
</feature>
<feature type="binding site" evidence="1">
    <location>
        <position position="412"/>
    </location>
    <ligand>
        <name>ATP</name>
        <dbReference type="ChEBI" id="CHEBI:30616"/>
    </ligand>
</feature>
<feature type="binding site" evidence="1">
    <location>
        <position position="416"/>
    </location>
    <ligand>
        <name>ADP</name>
        <dbReference type="ChEBI" id="CHEBI:456216"/>
    </ligand>
</feature>
<feature type="modified residue" description="Phosphohistidine; by HPr" evidence="1">
    <location>
        <position position="232"/>
    </location>
</feature>
<proteinExistence type="inferred from homology"/>
<organism>
    <name type="scientific">Streptococcus pyogenes serotype M5 (strain Manfredo)</name>
    <dbReference type="NCBI Taxonomy" id="160491"/>
    <lineage>
        <taxon>Bacteria</taxon>
        <taxon>Bacillati</taxon>
        <taxon>Bacillota</taxon>
        <taxon>Bacilli</taxon>
        <taxon>Lactobacillales</taxon>
        <taxon>Streptococcaceae</taxon>
        <taxon>Streptococcus</taxon>
    </lineage>
</organism>
<gene>
    <name evidence="1" type="primary">glpK</name>
    <name type="ordered locus">SpyM50409</name>
</gene>
<sequence>MSQEKYIMAIDQGTTSSRAIIFNQKGEKVSSSQKEFPQIFPHAGWVEHNANQIWNSVQSVIAGAFIESSIKPSQIEAIGITNQRETTVVWDKKTGVPIYNAIVWQSRQTAPIAEQLKQDGHTKMIHEKTGLVIDAYFSATKIRWILDHVPGAQERAEKGELLFGTIDTWLVWKLTDGAVHVTDYSNAARTMLYNIKDLTWDDEILELLNIPKDMLPEVKSNSEIYGKTAAFHFYGGEVPISGMAGDQQAALFGQLAFEPGMVKNTYGTGSFIIMNTGDEMQLSSNNLLTTIGYGINGKVHYALEGSIFIAGSAIQWLRDGLKMIETSPESEQFALASTSDDEVYVVPAFTGLGAPYWDSNARGSVFGLTRGTSKEDFVKATLQSIAYQVRDVIDTMQVDSGIDIQQLRVDGGAAMNNMLMQFQADILGIDIARAKNLETTALGAAFLAGLAVGYWEDMDALKELNATGQLFKASMNESRKEKLYKGWKRAVKATQVFTQEEDADDDAK</sequence>
<protein>
    <recommendedName>
        <fullName evidence="1">Glycerol kinase</fullName>
        <ecNumber evidence="1">2.7.1.30</ecNumber>
    </recommendedName>
    <alternativeName>
        <fullName evidence="1">ATP:glycerol 3-phosphotransferase</fullName>
    </alternativeName>
    <alternativeName>
        <fullName evidence="1">Glycerokinase</fullName>
        <shortName evidence="1">GK</shortName>
    </alternativeName>
</protein>
<evidence type="ECO:0000255" key="1">
    <source>
        <dbReference type="HAMAP-Rule" id="MF_00186"/>
    </source>
</evidence>
<name>GLPK_STRPG</name>
<accession>A2RD27</accession>
<reference key="1">
    <citation type="journal article" date="2007" name="J. Bacteriol.">
        <title>Complete genome of acute rheumatic fever-associated serotype M5 Streptococcus pyogenes strain Manfredo.</title>
        <authorList>
            <person name="Holden M.T.G."/>
            <person name="Scott A."/>
            <person name="Cherevach I."/>
            <person name="Chillingworth T."/>
            <person name="Churcher C."/>
            <person name="Cronin A."/>
            <person name="Dowd L."/>
            <person name="Feltwell T."/>
            <person name="Hamlin N."/>
            <person name="Holroyd S."/>
            <person name="Jagels K."/>
            <person name="Moule S."/>
            <person name="Mungall K."/>
            <person name="Quail M.A."/>
            <person name="Price C."/>
            <person name="Rabbinowitsch E."/>
            <person name="Sharp S."/>
            <person name="Skelton J."/>
            <person name="Whitehead S."/>
            <person name="Barrell B.G."/>
            <person name="Kehoe M."/>
            <person name="Parkhill J."/>
        </authorList>
    </citation>
    <scope>NUCLEOTIDE SEQUENCE [LARGE SCALE GENOMIC DNA]</scope>
    <source>
        <strain>Manfredo</strain>
    </source>
</reference>
<comment type="function">
    <text evidence="1">Key enzyme in the regulation of glycerol uptake and metabolism. Catalyzes the phosphorylation of glycerol to yield sn-glycerol 3-phosphate.</text>
</comment>
<comment type="catalytic activity">
    <reaction evidence="1">
        <text>glycerol + ATP = sn-glycerol 3-phosphate + ADP + H(+)</text>
        <dbReference type="Rhea" id="RHEA:21644"/>
        <dbReference type="ChEBI" id="CHEBI:15378"/>
        <dbReference type="ChEBI" id="CHEBI:17754"/>
        <dbReference type="ChEBI" id="CHEBI:30616"/>
        <dbReference type="ChEBI" id="CHEBI:57597"/>
        <dbReference type="ChEBI" id="CHEBI:456216"/>
        <dbReference type="EC" id="2.7.1.30"/>
    </reaction>
</comment>
<comment type="activity regulation">
    <text evidence="1">Activated by phosphorylation and inhibited by fructose 1,6-bisphosphate (FBP).</text>
</comment>
<comment type="pathway">
    <text evidence="1">Polyol metabolism; glycerol degradation via glycerol kinase pathway; sn-glycerol 3-phosphate from glycerol: step 1/1.</text>
</comment>
<comment type="subunit">
    <text evidence="1">Homotetramer and homodimer (in equilibrium).</text>
</comment>
<comment type="PTM">
    <text evidence="1">The phosphoenolpyruvate-dependent sugar phosphotransferase system (PTS), including enzyme I, and histidine-containing protein (HPr) are required for the phosphorylation, which leads to the activation of the enzyme.</text>
</comment>
<comment type="similarity">
    <text evidence="1">Belongs to the FGGY kinase family.</text>
</comment>
<keyword id="KW-0067">ATP-binding</keyword>
<keyword id="KW-0319">Glycerol metabolism</keyword>
<keyword id="KW-0418">Kinase</keyword>
<keyword id="KW-0547">Nucleotide-binding</keyword>
<keyword id="KW-0597">Phosphoprotein</keyword>
<keyword id="KW-0808">Transferase</keyword>